<proteinExistence type="inferred from homology"/>
<protein>
    <recommendedName>
        <fullName evidence="1">Peptide methionine sulfoxide reductase MsrB</fullName>
        <ecNumber evidence="1">1.8.4.12</ecNumber>
    </recommendedName>
    <alternativeName>
        <fullName evidence="1">Peptide-methionine (R)-S-oxide reductase</fullName>
    </alternativeName>
</protein>
<name>MSRB_BURO1</name>
<sequence>MSHDSDDKTFPYQKDDAELRRRLTPMQYEVTQHAATERAFTGEYTDTEDAGIYKCVVCSTPLFESGAKFHSGCGWPSYFKPLNGEVIDEKVDYSHGMVRVEVRCNNCGAHLGHVFEDGPRDKTGLRYCINSAALNFESRPENE</sequence>
<reference key="1">
    <citation type="submission" date="2006-05" db="EMBL/GenBank/DDBJ databases">
        <title>Complete sequence of chromosome 3 of Burkholderia cenocepacia AU 1054.</title>
        <authorList>
            <consortium name="US DOE Joint Genome Institute"/>
            <person name="Copeland A."/>
            <person name="Lucas S."/>
            <person name="Lapidus A."/>
            <person name="Barry K."/>
            <person name="Detter J.C."/>
            <person name="Glavina del Rio T."/>
            <person name="Hammon N."/>
            <person name="Israni S."/>
            <person name="Dalin E."/>
            <person name="Tice H."/>
            <person name="Pitluck S."/>
            <person name="Chain P."/>
            <person name="Malfatti S."/>
            <person name="Shin M."/>
            <person name="Vergez L."/>
            <person name="Schmutz J."/>
            <person name="Larimer F."/>
            <person name="Land M."/>
            <person name="Hauser L."/>
            <person name="Kyrpides N."/>
            <person name="Lykidis A."/>
            <person name="LiPuma J.J."/>
            <person name="Konstantinidis K."/>
            <person name="Tiedje J.M."/>
            <person name="Richardson P."/>
        </authorList>
    </citation>
    <scope>NUCLEOTIDE SEQUENCE [LARGE SCALE GENOMIC DNA]</scope>
    <source>
        <strain>AU 1054</strain>
    </source>
</reference>
<dbReference type="EC" id="1.8.4.12" evidence="1"/>
<dbReference type="EMBL" id="CP000380">
    <property type="protein sequence ID" value="ABF81034.1"/>
    <property type="molecule type" value="Genomic_DNA"/>
</dbReference>
<dbReference type="SMR" id="Q1BH71"/>
<dbReference type="HOGENOM" id="CLU_031040_8_5_4"/>
<dbReference type="GO" id="GO:0005737">
    <property type="term" value="C:cytoplasm"/>
    <property type="evidence" value="ECO:0007669"/>
    <property type="project" value="TreeGrafter"/>
</dbReference>
<dbReference type="GO" id="GO:0033743">
    <property type="term" value="F:peptide-methionine (R)-S-oxide reductase activity"/>
    <property type="evidence" value="ECO:0007669"/>
    <property type="project" value="UniProtKB-UniRule"/>
</dbReference>
<dbReference type="GO" id="GO:0008270">
    <property type="term" value="F:zinc ion binding"/>
    <property type="evidence" value="ECO:0007669"/>
    <property type="project" value="UniProtKB-UniRule"/>
</dbReference>
<dbReference type="GO" id="GO:0030091">
    <property type="term" value="P:protein repair"/>
    <property type="evidence" value="ECO:0007669"/>
    <property type="project" value="InterPro"/>
</dbReference>
<dbReference type="GO" id="GO:0006979">
    <property type="term" value="P:response to oxidative stress"/>
    <property type="evidence" value="ECO:0007669"/>
    <property type="project" value="InterPro"/>
</dbReference>
<dbReference type="FunFam" id="2.170.150.20:FF:000003">
    <property type="entry name" value="Peptide methionine sulfoxide reductase MsrB"/>
    <property type="match status" value="1"/>
</dbReference>
<dbReference type="Gene3D" id="2.170.150.20">
    <property type="entry name" value="Peptide methionine sulfoxide reductase"/>
    <property type="match status" value="1"/>
</dbReference>
<dbReference type="HAMAP" id="MF_01400">
    <property type="entry name" value="MsrB"/>
    <property type="match status" value="1"/>
</dbReference>
<dbReference type="InterPro" id="IPR028427">
    <property type="entry name" value="Met_Sox_Rdtase_MsrB"/>
</dbReference>
<dbReference type="InterPro" id="IPR002579">
    <property type="entry name" value="Met_Sox_Rdtase_MsrB_dom"/>
</dbReference>
<dbReference type="InterPro" id="IPR011057">
    <property type="entry name" value="Mss4-like_sf"/>
</dbReference>
<dbReference type="NCBIfam" id="TIGR00357">
    <property type="entry name" value="peptide-methionine (R)-S-oxide reductase MsrB"/>
    <property type="match status" value="1"/>
</dbReference>
<dbReference type="PANTHER" id="PTHR10173">
    <property type="entry name" value="METHIONINE SULFOXIDE REDUCTASE"/>
    <property type="match status" value="1"/>
</dbReference>
<dbReference type="PANTHER" id="PTHR10173:SF52">
    <property type="entry name" value="METHIONINE-R-SULFOXIDE REDUCTASE B1"/>
    <property type="match status" value="1"/>
</dbReference>
<dbReference type="Pfam" id="PF01641">
    <property type="entry name" value="SelR"/>
    <property type="match status" value="1"/>
</dbReference>
<dbReference type="SUPFAM" id="SSF51316">
    <property type="entry name" value="Mss4-like"/>
    <property type="match status" value="1"/>
</dbReference>
<dbReference type="PROSITE" id="PS51790">
    <property type="entry name" value="MSRB"/>
    <property type="match status" value="1"/>
</dbReference>
<organism>
    <name type="scientific">Burkholderia orbicola (strain AU 1054)</name>
    <dbReference type="NCBI Taxonomy" id="331271"/>
    <lineage>
        <taxon>Bacteria</taxon>
        <taxon>Pseudomonadati</taxon>
        <taxon>Pseudomonadota</taxon>
        <taxon>Betaproteobacteria</taxon>
        <taxon>Burkholderiales</taxon>
        <taxon>Burkholderiaceae</taxon>
        <taxon>Burkholderia</taxon>
        <taxon>Burkholderia cepacia complex</taxon>
        <taxon>Burkholderia orbicola</taxon>
    </lineage>
</organism>
<evidence type="ECO:0000255" key="1">
    <source>
        <dbReference type="HAMAP-Rule" id="MF_01400"/>
    </source>
</evidence>
<evidence type="ECO:0000255" key="2">
    <source>
        <dbReference type="PROSITE-ProRule" id="PRU01126"/>
    </source>
</evidence>
<feature type="chain" id="PRO_1000145351" description="Peptide methionine sulfoxide reductase MsrB">
    <location>
        <begin position="1"/>
        <end position="143"/>
    </location>
</feature>
<feature type="domain" description="MsrB" evidence="2">
    <location>
        <begin position="16"/>
        <end position="139"/>
    </location>
</feature>
<feature type="active site" description="Nucleophile" evidence="2">
    <location>
        <position position="128"/>
    </location>
</feature>
<feature type="binding site" evidence="2">
    <location>
        <position position="55"/>
    </location>
    <ligand>
        <name>Zn(2+)</name>
        <dbReference type="ChEBI" id="CHEBI:29105"/>
    </ligand>
</feature>
<feature type="binding site" evidence="2">
    <location>
        <position position="58"/>
    </location>
    <ligand>
        <name>Zn(2+)</name>
        <dbReference type="ChEBI" id="CHEBI:29105"/>
    </ligand>
</feature>
<feature type="binding site" evidence="2">
    <location>
        <position position="104"/>
    </location>
    <ligand>
        <name>Zn(2+)</name>
        <dbReference type="ChEBI" id="CHEBI:29105"/>
    </ligand>
</feature>
<feature type="binding site" evidence="2">
    <location>
        <position position="107"/>
    </location>
    <ligand>
        <name>Zn(2+)</name>
        <dbReference type="ChEBI" id="CHEBI:29105"/>
    </ligand>
</feature>
<accession>Q1BH71</accession>
<gene>
    <name evidence="1" type="primary">msrB</name>
    <name type="ordered locus">Bcen_6170</name>
</gene>
<comment type="catalytic activity">
    <reaction evidence="1">
        <text>L-methionyl-[protein] + [thioredoxin]-disulfide + H2O = L-methionyl-(R)-S-oxide-[protein] + [thioredoxin]-dithiol</text>
        <dbReference type="Rhea" id="RHEA:24164"/>
        <dbReference type="Rhea" id="RHEA-COMP:10698"/>
        <dbReference type="Rhea" id="RHEA-COMP:10700"/>
        <dbReference type="Rhea" id="RHEA-COMP:12313"/>
        <dbReference type="Rhea" id="RHEA-COMP:12314"/>
        <dbReference type="ChEBI" id="CHEBI:15377"/>
        <dbReference type="ChEBI" id="CHEBI:16044"/>
        <dbReference type="ChEBI" id="CHEBI:29950"/>
        <dbReference type="ChEBI" id="CHEBI:45764"/>
        <dbReference type="ChEBI" id="CHEBI:50058"/>
        <dbReference type="EC" id="1.8.4.12"/>
    </reaction>
</comment>
<comment type="cofactor">
    <cofactor evidence="1">
        <name>Zn(2+)</name>
        <dbReference type="ChEBI" id="CHEBI:29105"/>
    </cofactor>
    <text evidence="1">Binds 1 zinc ion per subunit. The zinc ion is important for the structural integrity of the protein.</text>
</comment>
<comment type="similarity">
    <text evidence="1">Belongs to the MsrB Met sulfoxide reductase family.</text>
</comment>
<keyword id="KW-0479">Metal-binding</keyword>
<keyword id="KW-0560">Oxidoreductase</keyword>
<keyword id="KW-0862">Zinc</keyword>